<comment type="function">
    <text evidence="1">Catalyzes the attachment of L-aspartate to tRNA(Asp) in a two-step reaction: L-aspartate is first activated by ATP to form Asp-AMP and then transferred to the acceptor end of tRNA(Asp).</text>
</comment>
<comment type="catalytic activity">
    <reaction evidence="1">
        <text>tRNA(Asp) + L-aspartate + ATP = L-aspartyl-tRNA(Asp) + AMP + diphosphate</text>
        <dbReference type="Rhea" id="RHEA:19649"/>
        <dbReference type="Rhea" id="RHEA-COMP:9660"/>
        <dbReference type="Rhea" id="RHEA-COMP:9678"/>
        <dbReference type="ChEBI" id="CHEBI:29991"/>
        <dbReference type="ChEBI" id="CHEBI:30616"/>
        <dbReference type="ChEBI" id="CHEBI:33019"/>
        <dbReference type="ChEBI" id="CHEBI:78442"/>
        <dbReference type="ChEBI" id="CHEBI:78516"/>
        <dbReference type="ChEBI" id="CHEBI:456215"/>
        <dbReference type="EC" id="6.1.1.12"/>
    </reaction>
</comment>
<comment type="subunit">
    <text evidence="1">Homodimer.</text>
</comment>
<comment type="subcellular location">
    <subcellularLocation>
        <location evidence="1">Cytoplasm</location>
    </subcellularLocation>
</comment>
<comment type="similarity">
    <text evidence="1">Belongs to the class-II aminoacyl-tRNA synthetase family. Type 1 subfamily.</text>
</comment>
<sequence length="590" mass="65885">MRTEYCGQLRLSHVGQQVTLCGWVNRRRDLGSLIFIDMRDREGIVQVFFDPDRADALKLASELRNEFCIQVTGTVRARDEKNINRDMATGEIEVLASSLTIINRADVLPLDSNHVNTEEARLKYRYLDLRRPEMAQRLKTRAKITSLVRRFMDDHGFLDIETPMLTKATPEGARDYLVPSRVHKGKFYALPQSPQLFKQLLMMSGFDRYYQIVKCFRDEDLRADRQPEFTQIDVETSFMTAPQVREVMEALVRHLWLEVKGVDLGDFPVMTFAEAERRYGSDKPDLRNPMELTDVADLLKSVEFAVFAGPANDLKGRVAALRVPGGASLTRKQIDEYGNFVKIYGAKGLAYIKVNERAKGLEGINSPVAKFLNAEIIEAILDRTAAQDGDMIFFGADNKKIVADAMGALRLKVGKDLGLTDESKWAPLWVIDFPMFEDDGEGGLTAMHHPFTSPKDMTAAELKAAPENAVANAYDMVINGYEVGGGSVRIHNGDMQQTVFGILGINEEEQREKFGFLLDALKYGTPPHAGLAFGLDRLTMLLTGTDNIRDVIAFPKTTAAACLMTEAPSFANPTALAELSIQVVKKAENN</sequence>
<reference key="1">
    <citation type="journal article" date="2005" name="Nucleic Acids Res.">
        <title>Genome dynamics and diversity of Shigella species, the etiologic agents of bacillary dysentery.</title>
        <authorList>
            <person name="Yang F."/>
            <person name="Yang J."/>
            <person name="Zhang X."/>
            <person name="Chen L."/>
            <person name="Jiang Y."/>
            <person name="Yan Y."/>
            <person name="Tang X."/>
            <person name="Wang J."/>
            <person name="Xiong Z."/>
            <person name="Dong J."/>
            <person name="Xue Y."/>
            <person name="Zhu Y."/>
            <person name="Xu X."/>
            <person name="Sun L."/>
            <person name="Chen S."/>
            <person name="Nie H."/>
            <person name="Peng J."/>
            <person name="Xu J."/>
            <person name="Wang Y."/>
            <person name="Yuan Z."/>
            <person name="Wen Y."/>
            <person name="Yao Z."/>
            <person name="Shen Y."/>
            <person name="Qiang B."/>
            <person name="Hou Y."/>
            <person name="Yu J."/>
            <person name="Jin Q."/>
        </authorList>
    </citation>
    <scope>NUCLEOTIDE SEQUENCE [LARGE SCALE GENOMIC DNA]</scope>
    <source>
        <strain>Sd197</strain>
    </source>
</reference>
<protein>
    <recommendedName>
        <fullName evidence="1">Aspartate--tRNA ligase</fullName>
        <ecNumber evidence="1">6.1.1.12</ecNumber>
    </recommendedName>
    <alternativeName>
        <fullName evidence="1">Aspartyl-tRNA synthetase</fullName>
        <shortName evidence="1">AspRS</shortName>
    </alternativeName>
</protein>
<organism>
    <name type="scientific">Shigella dysenteriae serotype 1 (strain Sd197)</name>
    <dbReference type="NCBI Taxonomy" id="300267"/>
    <lineage>
        <taxon>Bacteria</taxon>
        <taxon>Pseudomonadati</taxon>
        <taxon>Pseudomonadota</taxon>
        <taxon>Gammaproteobacteria</taxon>
        <taxon>Enterobacterales</taxon>
        <taxon>Enterobacteriaceae</taxon>
        <taxon>Shigella</taxon>
    </lineage>
</organism>
<dbReference type="EC" id="6.1.1.12" evidence="1"/>
<dbReference type="EMBL" id="CP000034">
    <property type="protein sequence ID" value="ABB61310.1"/>
    <property type="molecule type" value="Genomic_DNA"/>
</dbReference>
<dbReference type="RefSeq" id="WP_001258651.1">
    <property type="nucleotide sequence ID" value="NC_007606.1"/>
</dbReference>
<dbReference type="RefSeq" id="YP_402801.1">
    <property type="nucleotide sequence ID" value="NC_007606.1"/>
</dbReference>
<dbReference type="SMR" id="Q32H95"/>
<dbReference type="STRING" id="300267.SDY_1153"/>
<dbReference type="EnsemblBacteria" id="ABB61310">
    <property type="protein sequence ID" value="ABB61310"/>
    <property type="gene ID" value="SDY_1153"/>
</dbReference>
<dbReference type="KEGG" id="sdy:SDY_1153"/>
<dbReference type="PATRIC" id="fig|300267.13.peg.1357"/>
<dbReference type="HOGENOM" id="CLU_014330_3_2_6"/>
<dbReference type="Proteomes" id="UP000002716">
    <property type="component" value="Chromosome"/>
</dbReference>
<dbReference type="GO" id="GO:0005737">
    <property type="term" value="C:cytoplasm"/>
    <property type="evidence" value="ECO:0007669"/>
    <property type="project" value="UniProtKB-SubCell"/>
</dbReference>
<dbReference type="GO" id="GO:0004815">
    <property type="term" value="F:aspartate-tRNA ligase activity"/>
    <property type="evidence" value="ECO:0007669"/>
    <property type="project" value="UniProtKB-UniRule"/>
</dbReference>
<dbReference type="GO" id="GO:0005524">
    <property type="term" value="F:ATP binding"/>
    <property type="evidence" value="ECO:0007669"/>
    <property type="project" value="UniProtKB-UniRule"/>
</dbReference>
<dbReference type="GO" id="GO:0003676">
    <property type="term" value="F:nucleic acid binding"/>
    <property type="evidence" value="ECO:0007669"/>
    <property type="project" value="InterPro"/>
</dbReference>
<dbReference type="GO" id="GO:0006422">
    <property type="term" value="P:aspartyl-tRNA aminoacylation"/>
    <property type="evidence" value="ECO:0007669"/>
    <property type="project" value="UniProtKB-UniRule"/>
</dbReference>
<dbReference type="CDD" id="cd00777">
    <property type="entry name" value="AspRS_core"/>
    <property type="match status" value="1"/>
</dbReference>
<dbReference type="CDD" id="cd04317">
    <property type="entry name" value="EcAspRS_like_N"/>
    <property type="match status" value="1"/>
</dbReference>
<dbReference type="FunFam" id="2.40.50.140:FF:000080">
    <property type="entry name" value="Aspartate--tRNA ligase"/>
    <property type="match status" value="1"/>
</dbReference>
<dbReference type="FunFam" id="3.30.1360.30:FF:000001">
    <property type="entry name" value="Aspartate--tRNA ligase"/>
    <property type="match status" value="1"/>
</dbReference>
<dbReference type="Gene3D" id="3.30.930.10">
    <property type="entry name" value="Bira Bifunctional Protein, Domain 2"/>
    <property type="match status" value="1"/>
</dbReference>
<dbReference type="Gene3D" id="3.30.1360.30">
    <property type="entry name" value="GAD-like domain"/>
    <property type="match status" value="1"/>
</dbReference>
<dbReference type="Gene3D" id="2.40.50.140">
    <property type="entry name" value="Nucleic acid-binding proteins"/>
    <property type="match status" value="1"/>
</dbReference>
<dbReference type="HAMAP" id="MF_00044">
    <property type="entry name" value="Asp_tRNA_synth_type1"/>
    <property type="match status" value="1"/>
</dbReference>
<dbReference type="InterPro" id="IPR004364">
    <property type="entry name" value="Aa-tRNA-synt_II"/>
</dbReference>
<dbReference type="InterPro" id="IPR006195">
    <property type="entry name" value="aa-tRNA-synth_II"/>
</dbReference>
<dbReference type="InterPro" id="IPR045864">
    <property type="entry name" value="aa-tRNA-synth_II/BPL/LPL"/>
</dbReference>
<dbReference type="InterPro" id="IPR004524">
    <property type="entry name" value="Asp-tRNA-ligase_1"/>
</dbReference>
<dbReference type="InterPro" id="IPR047089">
    <property type="entry name" value="Asp-tRNA-ligase_1_N"/>
</dbReference>
<dbReference type="InterPro" id="IPR002312">
    <property type="entry name" value="Asp/Asn-tRNA-synth_IIb"/>
</dbReference>
<dbReference type="InterPro" id="IPR047090">
    <property type="entry name" value="AspRS_core"/>
</dbReference>
<dbReference type="InterPro" id="IPR004115">
    <property type="entry name" value="GAD-like_sf"/>
</dbReference>
<dbReference type="InterPro" id="IPR029351">
    <property type="entry name" value="GAD_dom"/>
</dbReference>
<dbReference type="InterPro" id="IPR012340">
    <property type="entry name" value="NA-bd_OB-fold"/>
</dbReference>
<dbReference type="InterPro" id="IPR004365">
    <property type="entry name" value="NA-bd_OB_tRNA"/>
</dbReference>
<dbReference type="NCBIfam" id="TIGR00459">
    <property type="entry name" value="aspS_bact"/>
    <property type="match status" value="1"/>
</dbReference>
<dbReference type="NCBIfam" id="NF001750">
    <property type="entry name" value="PRK00476.1"/>
    <property type="match status" value="1"/>
</dbReference>
<dbReference type="PANTHER" id="PTHR22594:SF5">
    <property type="entry name" value="ASPARTATE--TRNA LIGASE, MITOCHONDRIAL"/>
    <property type="match status" value="1"/>
</dbReference>
<dbReference type="PANTHER" id="PTHR22594">
    <property type="entry name" value="ASPARTYL/LYSYL-TRNA SYNTHETASE"/>
    <property type="match status" value="1"/>
</dbReference>
<dbReference type="Pfam" id="PF02938">
    <property type="entry name" value="GAD"/>
    <property type="match status" value="1"/>
</dbReference>
<dbReference type="Pfam" id="PF00152">
    <property type="entry name" value="tRNA-synt_2"/>
    <property type="match status" value="1"/>
</dbReference>
<dbReference type="Pfam" id="PF01336">
    <property type="entry name" value="tRNA_anti-codon"/>
    <property type="match status" value="1"/>
</dbReference>
<dbReference type="PRINTS" id="PR01042">
    <property type="entry name" value="TRNASYNTHASP"/>
</dbReference>
<dbReference type="SUPFAM" id="SSF55681">
    <property type="entry name" value="Class II aaRS and biotin synthetases"/>
    <property type="match status" value="1"/>
</dbReference>
<dbReference type="SUPFAM" id="SSF55261">
    <property type="entry name" value="GAD domain-like"/>
    <property type="match status" value="1"/>
</dbReference>
<dbReference type="SUPFAM" id="SSF50249">
    <property type="entry name" value="Nucleic acid-binding proteins"/>
    <property type="match status" value="1"/>
</dbReference>
<dbReference type="PROSITE" id="PS50862">
    <property type="entry name" value="AA_TRNA_LIGASE_II"/>
    <property type="match status" value="1"/>
</dbReference>
<proteinExistence type="inferred from homology"/>
<feature type="chain" id="PRO_0000235557" description="Aspartate--tRNA ligase">
    <location>
        <begin position="1"/>
        <end position="590"/>
    </location>
</feature>
<feature type="region of interest" description="Aspartate" evidence="1">
    <location>
        <begin position="195"/>
        <end position="198"/>
    </location>
</feature>
<feature type="binding site" evidence="1">
    <location>
        <position position="171"/>
    </location>
    <ligand>
        <name>L-aspartate</name>
        <dbReference type="ChEBI" id="CHEBI:29991"/>
    </ligand>
</feature>
<feature type="binding site" evidence="1">
    <location>
        <begin position="217"/>
        <end position="219"/>
    </location>
    <ligand>
        <name>ATP</name>
        <dbReference type="ChEBI" id="CHEBI:30616"/>
    </ligand>
</feature>
<feature type="binding site" evidence="1">
    <location>
        <position position="217"/>
    </location>
    <ligand>
        <name>L-aspartate</name>
        <dbReference type="ChEBI" id="CHEBI:29991"/>
    </ligand>
</feature>
<feature type="binding site" evidence="1">
    <location>
        <position position="226"/>
    </location>
    <ligand>
        <name>ATP</name>
        <dbReference type="ChEBI" id="CHEBI:30616"/>
    </ligand>
</feature>
<feature type="binding site" evidence="1">
    <location>
        <position position="448"/>
    </location>
    <ligand>
        <name>L-aspartate</name>
        <dbReference type="ChEBI" id="CHEBI:29991"/>
    </ligand>
</feature>
<feature type="binding site" evidence="1">
    <location>
        <position position="482"/>
    </location>
    <ligand>
        <name>ATP</name>
        <dbReference type="ChEBI" id="CHEBI:30616"/>
    </ligand>
</feature>
<feature type="binding site" evidence="1">
    <location>
        <position position="489"/>
    </location>
    <ligand>
        <name>L-aspartate</name>
        <dbReference type="ChEBI" id="CHEBI:29991"/>
    </ligand>
</feature>
<feature type="binding site" evidence="1">
    <location>
        <begin position="534"/>
        <end position="537"/>
    </location>
    <ligand>
        <name>ATP</name>
        <dbReference type="ChEBI" id="CHEBI:30616"/>
    </ligand>
</feature>
<gene>
    <name evidence="1" type="primary">aspS</name>
    <name type="ordered locus">SDY_1153</name>
</gene>
<keyword id="KW-0030">Aminoacyl-tRNA synthetase</keyword>
<keyword id="KW-0067">ATP-binding</keyword>
<keyword id="KW-0963">Cytoplasm</keyword>
<keyword id="KW-0436">Ligase</keyword>
<keyword id="KW-0547">Nucleotide-binding</keyword>
<keyword id="KW-0648">Protein biosynthesis</keyword>
<keyword id="KW-1185">Reference proteome</keyword>
<evidence type="ECO:0000255" key="1">
    <source>
        <dbReference type="HAMAP-Rule" id="MF_00044"/>
    </source>
</evidence>
<accession>Q32H95</accession>
<name>SYD_SHIDS</name>